<protein>
    <recommendedName>
        <fullName>DNA replication licensing factor MCM6</fullName>
        <ecNumber evidence="4">3.6.4.12</ecNumber>
    </recommendedName>
    <alternativeName>
        <fullName>Mis5 homolog</fullName>
    </alternativeName>
</protein>
<feature type="chain" id="PRO_0000194114" description="DNA replication licensing factor MCM6">
    <location>
        <begin position="1"/>
        <end position="821"/>
    </location>
</feature>
<feature type="domain" description="MCM">
    <location>
        <begin position="346"/>
        <end position="553"/>
    </location>
</feature>
<feature type="region of interest" description="Disordered" evidence="3">
    <location>
        <begin position="676"/>
        <end position="708"/>
    </location>
</feature>
<feature type="short sequence motif" description="Arginine finger">
    <location>
        <begin position="528"/>
        <end position="531"/>
    </location>
</feature>
<feature type="compositionally biased region" description="Polar residues" evidence="3">
    <location>
        <begin position="696"/>
        <end position="708"/>
    </location>
</feature>
<feature type="binding site" evidence="1">
    <location>
        <position position="359"/>
    </location>
    <ligand>
        <name>ATP</name>
        <dbReference type="ChEBI" id="CHEBI:30616"/>
        <note>ligand shared with MCM4</note>
    </ligand>
</feature>
<feature type="binding site" evidence="1">
    <location>
        <position position="399"/>
    </location>
    <ligand>
        <name>ATP</name>
        <dbReference type="ChEBI" id="CHEBI:30616"/>
        <note>ligand shared with MCM4</note>
    </ligand>
</feature>
<feature type="binding site" evidence="1">
    <location>
        <position position="400"/>
    </location>
    <ligand>
        <name>ATP</name>
        <dbReference type="ChEBI" id="CHEBI:30616"/>
        <note>ligand shared with MCM4</note>
    </ligand>
</feature>
<feature type="binding site" evidence="1">
    <location>
        <position position="401"/>
    </location>
    <ligand>
        <name>ATP</name>
        <dbReference type="ChEBI" id="CHEBI:30616"/>
        <note>ligand shared with MCM4</note>
    </ligand>
</feature>
<feature type="binding site" evidence="1">
    <location>
        <position position="402"/>
    </location>
    <ligand>
        <name>ATP</name>
        <dbReference type="ChEBI" id="CHEBI:30616"/>
        <note>ligand shared with MCM4</note>
    </ligand>
</feature>
<feature type="binding site" evidence="1">
    <location>
        <position position="403"/>
    </location>
    <ligand>
        <name>ATP</name>
        <dbReference type="ChEBI" id="CHEBI:30616"/>
        <note>ligand shared with MCM4</note>
    </ligand>
</feature>
<feature type="binding site" evidence="1">
    <location>
        <position position="504"/>
    </location>
    <ligand>
        <name>ATP</name>
        <dbReference type="ChEBI" id="CHEBI:30616"/>
        <note>ligand shared with MCM4</note>
    </ligand>
</feature>
<feature type="binding site" evidence="1">
    <location>
        <position position="619"/>
    </location>
    <ligand>
        <name>ADP</name>
        <dbReference type="ChEBI" id="CHEBI:456216"/>
        <note>ligand shared with MCM2</note>
    </ligand>
</feature>
<feature type="binding site" evidence="1">
    <location>
        <position position="622"/>
    </location>
    <ligand>
        <name>ADP</name>
        <dbReference type="ChEBI" id="CHEBI:456216"/>
        <note>ligand shared with MCM2</note>
    </ligand>
</feature>
<feature type="modified residue" description="N-acetylmethionine" evidence="1">
    <location>
        <position position="1"/>
    </location>
</feature>
<feature type="modified residue" description="Phosphoserine" evidence="1">
    <location>
        <position position="13"/>
    </location>
</feature>
<feature type="modified residue" description="Phosphoserine" evidence="1">
    <location>
        <position position="219"/>
    </location>
</feature>
<feature type="modified residue" description="Phosphoserine" evidence="7">
    <location>
        <position position="271"/>
    </location>
</feature>
<feature type="modified residue" description="Phosphothreonine" evidence="1">
    <location>
        <position position="278"/>
    </location>
</feature>
<feature type="modified residue" description="N6-acetyllysine" evidence="8">
    <location>
        <position position="643"/>
    </location>
</feature>
<feature type="modified residue" description="Phosphoserine" evidence="7">
    <location>
        <position position="689"/>
    </location>
</feature>
<feature type="modified residue" description="Phosphoserine" evidence="7">
    <location>
        <position position="704"/>
    </location>
</feature>
<feature type="modified residue" description="Phosphoserine" evidence="7">
    <location>
        <position position="762"/>
    </location>
</feature>
<feature type="modified residue" description="Phosphothreonine" evidence="6">
    <location>
        <position position="791"/>
    </location>
</feature>
<feature type="mutagenesis site" description="Decreased MCM complex DNA helicase activity. Loss of ATP-binding. Decreased MCM complex ATPase activity. No effect on MCM complex formation." evidence="4">
    <original>KS</original>
    <variation>AA</variation>
    <location>
        <begin position="402"/>
        <end position="403"/>
    </location>
</feature>
<feature type="mutagenesis site" description="Loss of MCM complex DNA helicase activity. Loss of ATP-binding. No effect on MCM complex formation. No effect on MCM complex ATPase activity and ssDNA binding." evidence="4">
    <original>DE</original>
    <variation>AA</variation>
    <location>
        <begin position="460"/>
        <end position="461"/>
    </location>
</feature>
<organism>
    <name type="scientific">Mus musculus</name>
    <name type="common">Mouse</name>
    <dbReference type="NCBI Taxonomy" id="10090"/>
    <lineage>
        <taxon>Eukaryota</taxon>
        <taxon>Metazoa</taxon>
        <taxon>Chordata</taxon>
        <taxon>Craniata</taxon>
        <taxon>Vertebrata</taxon>
        <taxon>Euteleostomi</taxon>
        <taxon>Mammalia</taxon>
        <taxon>Eutheria</taxon>
        <taxon>Euarchontoglires</taxon>
        <taxon>Glires</taxon>
        <taxon>Rodentia</taxon>
        <taxon>Myomorpha</taxon>
        <taxon>Muroidea</taxon>
        <taxon>Muridae</taxon>
        <taxon>Murinae</taxon>
        <taxon>Mus</taxon>
        <taxon>Mus</taxon>
    </lineage>
</organism>
<proteinExistence type="evidence at protein level"/>
<gene>
    <name type="primary">Mcm6</name>
    <name type="synonym">Mcmd6</name>
    <name type="synonym">Mis5</name>
</gene>
<reference key="1">
    <citation type="journal article" date="1996" name="Genes Cells">
        <title>Mouse MCM proteins: complex formation and transportation to the nucleus.</title>
        <authorList>
            <person name="Kimura H."/>
            <person name="Ohtomo T."/>
            <person name="Yamaguchi M."/>
            <person name="Ishii A."/>
            <person name="Sugimoto K."/>
        </authorList>
    </citation>
    <scope>NUCLEOTIDE SEQUENCE [MRNA]</scope>
    <scope>PARTIAL PROTEIN SEQUENCE</scope>
</reference>
<reference key="2">
    <citation type="journal article" date="2004" name="Genome Res.">
        <title>The status, quality, and expansion of the NIH full-length cDNA project: the Mammalian Gene Collection (MGC).</title>
        <authorList>
            <consortium name="The MGC Project Team"/>
        </authorList>
    </citation>
    <scope>NUCLEOTIDE SEQUENCE [LARGE SCALE MRNA]</scope>
    <source>
        <strain>C57BL/6J</strain>
        <tissue>Brain</tissue>
    </source>
</reference>
<reference key="3">
    <citation type="journal article" date="1999" name="Mol. Cell. Biol.">
        <title>Biochemical analysis of the intrinsic Mcm4-Mcm6-mcm7 DNA helicase activity.</title>
        <authorList>
            <person name="You Z."/>
            <person name="Komamura Y."/>
            <person name="Ishimi Y."/>
        </authorList>
    </citation>
    <scope>FUNCTION</scope>
    <scope>CATALYTIC ACTIVITY</scope>
    <scope>IDENTIFICATION IN THE MCM2-7 COMPLEX</scope>
    <scope>MUTAGENESIS OF 402-LYS-SER-403 AND 460-ASP-GLU-461</scope>
    <scope>ATP-BINDING</scope>
</reference>
<reference key="4">
    <citation type="journal article" date="2007" name="Science">
        <title>ATM and ATR substrate analysis reveals extensive protein networks responsive to DNA damage.</title>
        <authorList>
            <person name="Matsuoka S."/>
            <person name="Ballif B.A."/>
            <person name="Smogorzewska A."/>
            <person name="McDonald E.R. III"/>
            <person name="Hurov K.E."/>
            <person name="Luo J."/>
            <person name="Bakalarski C.E."/>
            <person name="Zhao Z."/>
            <person name="Solimini N."/>
            <person name="Lerenthal Y."/>
            <person name="Shiloh Y."/>
            <person name="Gygi S.P."/>
            <person name="Elledge S.J."/>
        </authorList>
    </citation>
    <scope>PHOSPHORYLATION [LARGE SCALE ANALYSIS] AT THR-791</scope>
    <scope>IDENTIFICATION BY MASS SPECTROMETRY [LARGE SCALE ANALYSIS]</scope>
    <source>
        <tissue>Embryonic fibroblast</tissue>
    </source>
</reference>
<reference key="5">
    <citation type="journal article" date="2010" name="Cell">
        <title>A tissue-specific atlas of mouse protein phosphorylation and expression.</title>
        <authorList>
            <person name="Huttlin E.L."/>
            <person name="Jedrychowski M.P."/>
            <person name="Elias J.E."/>
            <person name="Goswami T."/>
            <person name="Rad R."/>
            <person name="Beausoleil S.A."/>
            <person name="Villen J."/>
            <person name="Haas W."/>
            <person name="Sowa M.E."/>
            <person name="Gygi S.P."/>
        </authorList>
    </citation>
    <scope>PHOSPHORYLATION [LARGE SCALE ANALYSIS] AT SER-271; SER-689; SER-704 AND SER-762</scope>
    <scope>IDENTIFICATION BY MASS SPECTROMETRY [LARGE SCALE ANALYSIS]</scope>
    <source>
        <tissue>Brown adipose tissue</tissue>
        <tissue>Heart</tissue>
        <tissue>Kidney</tissue>
        <tissue>Liver</tissue>
        <tissue>Lung</tissue>
        <tissue>Pancreas</tissue>
        <tissue>Spleen</tissue>
        <tissue>Testis</tissue>
    </source>
</reference>
<reference key="6">
    <citation type="journal article" date="2013" name="Mol. Cell">
        <title>SIRT5-mediated lysine desuccinylation impacts diverse metabolic pathways.</title>
        <authorList>
            <person name="Park J."/>
            <person name="Chen Y."/>
            <person name="Tishkoff D.X."/>
            <person name="Peng C."/>
            <person name="Tan M."/>
            <person name="Dai L."/>
            <person name="Xie Z."/>
            <person name="Zhang Y."/>
            <person name="Zwaans B.M."/>
            <person name="Skinner M.E."/>
            <person name="Lombard D.B."/>
            <person name="Zhao Y."/>
        </authorList>
    </citation>
    <scope>ACETYLATION [LARGE SCALE ANALYSIS] AT LYS-643</scope>
    <scope>IDENTIFICATION BY MASS SPECTROMETRY [LARGE SCALE ANALYSIS]</scope>
    <source>
        <tissue>Embryonic fibroblast</tissue>
    </source>
</reference>
<comment type="function">
    <text evidence="4">Acts as a component of the MCM2-7 complex (MCM complex) which is the replicative helicase essential for 'once per cell cycle' DNA replication initiation and elongation in eukaryotic cells. Core component of CDC45-MCM-GINS (CMG) helicase, the molecular machine that unwinds template DNA during replication, and around which the replisome is built. The active ATPase sites in the MCM2-7 ring are formed through the interaction surfaces of two neighboring subunits such that a critical structure of a conserved arginine finger motif is provided in trans relative to the ATP-binding site of the Walker A box of the adjacent subunit. The six ATPase active sites, however, are likely to contribute differentially to the complex helicase activity.</text>
</comment>
<comment type="catalytic activity">
    <reaction evidence="4">
        <text>ATP + H2O = ADP + phosphate + H(+)</text>
        <dbReference type="Rhea" id="RHEA:13065"/>
        <dbReference type="ChEBI" id="CHEBI:15377"/>
        <dbReference type="ChEBI" id="CHEBI:15378"/>
        <dbReference type="ChEBI" id="CHEBI:30616"/>
        <dbReference type="ChEBI" id="CHEBI:43474"/>
        <dbReference type="ChEBI" id="CHEBI:456216"/>
        <dbReference type="EC" id="3.6.4.12"/>
    </reaction>
    <physiologicalReaction direction="left-to-right" evidence="4">
        <dbReference type="Rhea" id="RHEA:13066"/>
    </physiologicalReaction>
</comment>
<comment type="subunit">
    <text evidence="1 2 4">Component of the MCM2-7 complex (PubMed:10567526). The complex forms a toroidal hexameric ring with the proposed subunit order MCM2-MCM6-MCM4-MCM7-MCM3-MCM5. Component of the CMG helicase complex, a hexameric ring of related MCM2-7 subunits stabilized by CDC45 and the tetrameric GINS complex. May interact with MCM10. Interacts with TIPIN. Interacts with CDT1. Interacts with MCMBP. Interacts with DDI2 (By similarity).</text>
</comment>
<comment type="interaction">
    <interactant intactId="EBI-457132">
        <id>P97311</id>
    </interactant>
    <interactant intactId="EBI-457043">
        <id>Q8R4E9</id>
        <label>Cdt1</label>
    </interactant>
    <organismsDiffer>false</organismsDiffer>
    <experiments>2</experiments>
</comment>
<comment type="subcellular location">
    <subcellularLocation>
        <location evidence="1">Nucleus</location>
    </subcellularLocation>
    <subcellularLocation>
        <location evidence="1">Chromosome</location>
    </subcellularLocation>
    <text evidence="1">Binds to chromatin during G1 and detaches from it during S phase.</text>
</comment>
<comment type="PTM">
    <text evidence="1">O-glycosylated (O-GlcNAcylated), in a cell cycle-dependent manner.</text>
</comment>
<comment type="miscellaneous">
    <text evidence="4">Early fractionation of eukaryotic MCM proteins yielded a variety of dimeric, trimeric and tetrameric complexes with unclear biological significance. Specifically a MCM467 subcomplex is shown to have in vitro helicase activity which is inhibited by the MCM2 subunit. The MCM2-7 hexamer is the proposed physiological active complex.</text>
</comment>
<comment type="similarity">
    <text evidence="5">Belongs to the MCM family.</text>
</comment>
<keyword id="KW-0007">Acetylation</keyword>
<keyword id="KW-0067">ATP-binding</keyword>
<keyword id="KW-0131">Cell cycle</keyword>
<keyword id="KW-0158">Chromosome</keyword>
<keyword id="KW-0903">Direct protein sequencing</keyword>
<keyword id="KW-0235">DNA replication</keyword>
<keyword id="KW-0238">DNA-binding</keyword>
<keyword id="KW-0325">Glycoprotein</keyword>
<keyword id="KW-0347">Helicase</keyword>
<keyword id="KW-0378">Hydrolase</keyword>
<keyword id="KW-0547">Nucleotide-binding</keyword>
<keyword id="KW-0539">Nucleus</keyword>
<keyword id="KW-0597">Phosphoprotein</keyword>
<keyword id="KW-1185">Reference proteome</keyword>
<sequence>MDLAAAAEPGAGSQHPEVRDEVAEKCQKLFLDFLEEFQGSDGEIKYLQFAEELIRPERNTLVVSFADLEQFNQQLSTTIQEEFYRVYPYLCRALKTFVKDRKEIPFAKDFYVAFQDLPTRHKIRELTSSRIGLLTRISGQVVRTHPVHPELVSGTFLCLDCQTVIKDVEQQFKYTQPNICRNPVCANRKRFLLDTNKSRFVDFQKVRIQETQAELPRGSIPRSLEVILRAEAVESAQAGDRCDFTGALIVVPDVSKLSTPGARAETNSRVSGADGYETEGIRGLRALGVRDLSYRLVFLACHVAPTNPRFGGKELRDEEQTAESIKNQMTVKEWEKVFEMSQDKNLYHNLCTSLFPTIHGNDEVKRGVLLMLFGGVPKTTGEGTSLRGDINVCIVGDPSTAKSQFLKHVDEFSPRAVYTSGKASSAAGLTAAVVRDEESHEFVIEAGALMLADNGVCCIDEFDKMDMRDQVAIHEAMEQQTISITKAGVKATLNARTSILAAANPVSGHYDRSKSLKQNINLSAPIMSRFDLFFILVDECNEVTDYAIARRIVDLHSRIEESIDRVYSLDDIRRYLLFARQFKPKISKESEDFIVEQYKRLRQRDGSGVTKSSWRITVRQLESMIRLSESMARMHCCDEVQPKHVKEAFRLLNKSIIRVETPDVNLDQEEEIQMETDEGQGGVNGHADSPAPVNRFNGSSEDASQETVSKPSLRLGFAEYCRISNLIVLHLRKMEEEEDESALKRSELVNWYLKEIESEIDSEEELINKKTIIEKVVHRLTHYDHVLIELTQAGLKGSSEGSESYEEDPYLVVNPNYLLED</sequence>
<dbReference type="EC" id="3.6.4.12" evidence="4"/>
<dbReference type="EMBL" id="D86726">
    <property type="protein sequence ID" value="BAA13159.1"/>
    <property type="molecule type" value="mRNA"/>
</dbReference>
<dbReference type="EMBL" id="BC050886">
    <property type="protein sequence ID" value="AAH50886.2"/>
    <property type="molecule type" value="mRNA"/>
</dbReference>
<dbReference type="EMBL" id="BC057584">
    <property type="protein sequence ID" value="AAH57584.1"/>
    <property type="molecule type" value="mRNA"/>
</dbReference>
<dbReference type="CCDS" id="CCDS15252.1"/>
<dbReference type="RefSeq" id="NP_032593.1">
    <property type="nucleotide sequence ID" value="NM_008567.2"/>
</dbReference>
<dbReference type="SMR" id="P97311"/>
<dbReference type="BioGRID" id="201349">
    <property type="interactions" value="24"/>
</dbReference>
<dbReference type="ComplexPortal" id="CPX-2941">
    <property type="entry name" value="MCM complex"/>
</dbReference>
<dbReference type="CORUM" id="P97311"/>
<dbReference type="FunCoup" id="P97311">
    <property type="interactions" value="2477"/>
</dbReference>
<dbReference type="IntAct" id="P97311">
    <property type="interactions" value="8"/>
</dbReference>
<dbReference type="STRING" id="10090.ENSMUSP00000027601"/>
<dbReference type="iPTMnet" id="P97311"/>
<dbReference type="PhosphoSitePlus" id="P97311"/>
<dbReference type="SwissPalm" id="P97311"/>
<dbReference type="jPOST" id="P97311"/>
<dbReference type="PaxDb" id="10090-ENSMUSP00000027601"/>
<dbReference type="PeptideAtlas" id="P97311"/>
<dbReference type="ProteomicsDB" id="295840"/>
<dbReference type="Pumba" id="P97311"/>
<dbReference type="Antibodypedia" id="1416">
    <property type="antibodies" value="384 antibodies from 35 providers"/>
</dbReference>
<dbReference type="DNASU" id="17219"/>
<dbReference type="Ensembl" id="ENSMUST00000027601.11">
    <property type="protein sequence ID" value="ENSMUSP00000027601.5"/>
    <property type="gene ID" value="ENSMUSG00000026355.12"/>
</dbReference>
<dbReference type="GeneID" id="17219"/>
<dbReference type="KEGG" id="mmu:17219"/>
<dbReference type="UCSC" id="uc007cln.1">
    <property type="organism name" value="mouse"/>
</dbReference>
<dbReference type="AGR" id="MGI:1298227"/>
<dbReference type="CTD" id="4175"/>
<dbReference type="MGI" id="MGI:1298227">
    <property type="gene designation" value="Mcm6"/>
</dbReference>
<dbReference type="VEuPathDB" id="HostDB:ENSMUSG00000026355"/>
<dbReference type="eggNOG" id="KOG0480">
    <property type="taxonomic scope" value="Eukaryota"/>
</dbReference>
<dbReference type="GeneTree" id="ENSGT01050000244824"/>
<dbReference type="InParanoid" id="P97311"/>
<dbReference type="OMA" id="RHQQTDK"/>
<dbReference type="OrthoDB" id="1744952at2759"/>
<dbReference type="PhylomeDB" id="P97311"/>
<dbReference type="TreeFam" id="TF105646"/>
<dbReference type="Reactome" id="R-MMU-176187">
    <property type="pathway name" value="Activation of ATR in response to replication stress"/>
</dbReference>
<dbReference type="Reactome" id="R-MMU-68867">
    <property type="pathway name" value="Assembly of the pre-replicative complex"/>
</dbReference>
<dbReference type="Reactome" id="R-MMU-68949">
    <property type="pathway name" value="Orc1 removal from chromatin"/>
</dbReference>
<dbReference type="Reactome" id="R-MMU-68962">
    <property type="pathway name" value="Activation of the pre-replicative complex"/>
</dbReference>
<dbReference type="Reactome" id="R-MMU-69052">
    <property type="pathway name" value="Switching of origins to a post-replicative state"/>
</dbReference>
<dbReference type="BioGRID-ORCS" id="17219">
    <property type="hits" value="28 hits in 79 CRISPR screens"/>
</dbReference>
<dbReference type="CD-CODE" id="01CA17F3">
    <property type="entry name" value="Centrosome"/>
</dbReference>
<dbReference type="ChiTaRS" id="Mcm6">
    <property type="organism name" value="mouse"/>
</dbReference>
<dbReference type="PRO" id="PR:P97311"/>
<dbReference type="Proteomes" id="UP000000589">
    <property type="component" value="Chromosome 1"/>
</dbReference>
<dbReference type="RNAct" id="P97311">
    <property type="molecule type" value="protein"/>
</dbReference>
<dbReference type="Bgee" id="ENSMUSG00000026355">
    <property type="expression patterns" value="Expressed in somite and 233 other cell types or tissues"/>
</dbReference>
<dbReference type="ExpressionAtlas" id="P97311">
    <property type="expression patterns" value="baseline and differential"/>
</dbReference>
<dbReference type="GO" id="GO:0071162">
    <property type="term" value="C:CMG complex"/>
    <property type="evidence" value="ECO:0000250"/>
    <property type="project" value="UniProtKB"/>
</dbReference>
<dbReference type="GO" id="GO:0005829">
    <property type="term" value="C:cytosol"/>
    <property type="evidence" value="ECO:0007669"/>
    <property type="project" value="Ensembl"/>
</dbReference>
<dbReference type="GO" id="GO:0042555">
    <property type="term" value="C:MCM complex"/>
    <property type="evidence" value="ECO:0000314"/>
    <property type="project" value="UniProtKB"/>
</dbReference>
<dbReference type="GO" id="GO:0005634">
    <property type="term" value="C:nucleus"/>
    <property type="evidence" value="ECO:0000314"/>
    <property type="project" value="MGI"/>
</dbReference>
<dbReference type="GO" id="GO:0005524">
    <property type="term" value="F:ATP binding"/>
    <property type="evidence" value="ECO:0007669"/>
    <property type="project" value="UniProtKB-KW"/>
</dbReference>
<dbReference type="GO" id="GO:0016887">
    <property type="term" value="F:ATP hydrolysis activity"/>
    <property type="evidence" value="ECO:0007669"/>
    <property type="project" value="RHEA"/>
</dbReference>
<dbReference type="GO" id="GO:0003678">
    <property type="term" value="F:DNA helicase activity"/>
    <property type="evidence" value="ECO:0007669"/>
    <property type="project" value="Ensembl"/>
</dbReference>
<dbReference type="GO" id="GO:0042802">
    <property type="term" value="F:identical protein binding"/>
    <property type="evidence" value="ECO:0007669"/>
    <property type="project" value="Ensembl"/>
</dbReference>
<dbReference type="GO" id="GO:0003697">
    <property type="term" value="F:single-stranded DNA binding"/>
    <property type="evidence" value="ECO:0000353"/>
    <property type="project" value="MGI"/>
</dbReference>
<dbReference type="GO" id="GO:0006260">
    <property type="term" value="P:DNA replication"/>
    <property type="evidence" value="ECO:0000353"/>
    <property type="project" value="MGI"/>
</dbReference>
<dbReference type="GO" id="GO:0006270">
    <property type="term" value="P:DNA replication initiation"/>
    <property type="evidence" value="ECO:0007669"/>
    <property type="project" value="InterPro"/>
</dbReference>
<dbReference type="GO" id="GO:0006279">
    <property type="term" value="P:premeiotic DNA replication"/>
    <property type="evidence" value="ECO:0000303"/>
    <property type="project" value="ComplexPortal"/>
</dbReference>
<dbReference type="CDD" id="cd17757">
    <property type="entry name" value="MCM6"/>
    <property type="match status" value="1"/>
</dbReference>
<dbReference type="FunFam" id="1.20.58.870:FF:000001">
    <property type="entry name" value="DNA helicase"/>
    <property type="match status" value="1"/>
</dbReference>
<dbReference type="FunFam" id="2.20.28.10:FF:000003">
    <property type="entry name" value="DNA helicase"/>
    <property type="match status" value="1"/>
</dbReference>
<dbReference type="FunFam" id="2.40.50.140:FF:000091">
    <property type="entry name" value="DNA helicase"/>
    <property type="match status" value="1"/>
</dbReference>
<dbReference type="FunFam" id="3.30.1640.10:FF:000004">
    <property type="entry name" value="DNA helicase"/>
    <property type="match status" value="1"/>
</dbReference>
<dbReference type="FunFam" id="3.40.50.300:FF:000115">
    <property type="entry name" value="DNA helicase"/>
    <property type="match status" value="1"/>
</dbReference>
<dbReference type="Gene3D" id="1.20.58.870">
    <property type="match status" value="1"/>
</dbReference>
<dbReference type="Gene3D" id="2.20.28.10">
    <property type="match status" value="1"/>
</dbReference>
<dbReference type="Gene3D" id="3.30.1640.10">
    <property type="entry name" value="mini-chromosome maintenance (MCM) complex, chain A, domain 1"/>
    <property type="match status" value="1"/>
</dbReference>
<dbReference type="Gene3D" id="2.40.50.140">
    <property type="entry name" value="Nucleic acid-binding proteins"/>
    <property type="match status" value="1"/>
</dbReference>
<dbReference type="Gene3D" id="3.40.50.300">
    <property type="entry name" value="P-loop containing nucleotide triphosphate hydrolases"/>
    <property type="match status" value="1"/>
</dbReference>
<dbReference type="InterPro" id="IPR031327">
    <property type="entry name" value="MCM"/>
</dbReference>
<dbReference type="InterPro" id="IPR008049">
    <property type="entry name" value="MCM6"/>
</dbReference>
<dbReference type="InterPro" id="IPR041024">
    <property type="entry name" value="Mcm6_C"/>
</dbReference>
<dbReference type="InterPro" id="IPR018525">
    <property type="entry name" value="MCM_CS"/>
</dbReference>
<dbReference type="InterPro" id="IPR001208">
    <property type="entry name" value="MCM_dom"/>
</dbReference>
<dbReference type="InterPro" id="IPR041562">
    <property type="entry name" value="MCM_lid"/>
</dbReference>
<dbReference type="InterPro" id="IPR027925">
    <property type="entry name" value="MCM_N"/>
</dbReference>
<dbReference type="InterPro" id="IPR033762">
    <property type="entry name" value="MCM_OB"/>
</dbReference>
<dbReference type="InterPro" id="IPR012340">
    <property type="entry name" value="NA-bd_OB-fold"/>
</dbReference>
<dbReference type="InterPro" id="IPR027417">
    <property type="entry name" value="P-loop_NTPase"/>
</dbReference>
<dbReference type="PANTHER" id="PTHR11630">
    <property type="entry name" value="DNA REPLICATION LICENSING FACTOR MCM FAMILY MEMBER"/>
    <property type="match status" value="1"/>
</dbReference>
<dbReference type="PANTHER" id="PTHR11630:SF73">
    <property type="entry name" value="DNA REPLICATION LICENSING FACTOR MCM6"/>
    <property type="match status" value="1"/>
</dbReference>
<dbReference type="Pfam" id="PF00493">
    <property type="entry name" value="MCM"/>
    <property type="match status" value="1"/>
</dbReference>
<dbReference type="Pfam" id="PF18263">
    <property type="entry name" value="MCM6_C"/>
    <property type="match status" value="1"/>
</dbReference>
<dbReference type="Pfam" id="PF17855">
    <property type="entry name" value="MCM_lid"/>
    <property type="match status" value="1"/>
</dbReference>
<dbReference type="Pfam" id="PF14551">
    <property type="entry name" value="MCM_N"/>
    <property type="match status" value="1"/>
</dbReference>
<dbReference type="Pfam" id="PF17207">
    <property type="entry name" value="MCM_OB"/>
    <property type="match status" value="1"/>
</dbReference>
<dbReference type="PRINTS" id="PR01657">
    <property type="entry name" value="MCMFAMILY"/>
</dbReference>
<dbReference type="PRINTS" id="PR01662">
    <property type="entry name" value="MCMPROTEIN6"/>
</dbReference>
<dbReference type="SMART" id="SM00350">
    <property type="entry name" value="MCM"/>
    <property type="match status" value="1"/>
</dbReference>
<dbReference type="SUPFAM" id="SSF50249">
    <property type="entry name" value="Nucleic acid-binding proteins"/>
    <property type="match status" value="1"/>
</dbReference>
<dbReference type="SUPFAM" id="SSF52540">
    <property type="entry name" value="P-loop containing nucleoside triphosphate hydrolases"/>
    <property type="match status" value="1"/>
</dbReference>
<dbReference type="PROSITE" id="PS00847">
    <property type="entry name" value="MCM_1"/>
    <property type="match status" value="1"/>
</dbReference>
<dbReference type="PROSITE" id="PS50051">
    <property type="entry name" value="MCM_2"/>
    <property type="match status" value="1"/>
</dbReference>
<evidence type="ECO:0000250" key="1">
    <source>
        <dbReference type="UniProtKB" id="Q14566"/>
    </source>
</evidence>
<evidence type="ECO:0000250" key="2">
    <source>
        <dbReference type="UniProtKB" id="Q5FWY4"/>
    </source>
</evidence>
<evidence type="ECO:0000256" key="3">
    <source>
        <dbReference type="SAM" id="MobiDB-lite"/>
    </source>
</evidence>
<evidence type="ECO:0000269" key="4">
    <source>
    </source>
</evidence>
<evidence type="ECO:0000305" key="5"/>
<evidence type="ECO:0007744" key="6">
    <source>
    </source>
</evidence>
<evidence type="ECO:0007744" key="7">
    <source>
    </source>
</evidence>
<evidence type="ECO:0007744" key="8">
    <source>
    </source>
</evidence>
<name>MCM6_MOUSE</name>
<accession>P97311</accession>
<accession>Q80YQ7</accession>